<proteinExistence type="inferred from homology"/>
<name>SUCC_ECOHS</name>
<reference key="1">
    <citation type="journal article" date="2008" name="J. Bacteriol.">
        <title>The pangenome structure of Escherichia coli: comparative genomic analysis of E. coli commensal and pathogenic isolates.</title>
        <authorList>
            <person name="Rasko D.A."/>
            <person name="Rosovitz M.J."/>
            <person name="Myers G.S.A."/>
            <person name="Mongodin E.F."/>
            <person name="Fricke W.F."/>
            <person name="Gajer P."/>
            <person name="Crabtree J."/>
            <person name="Sebaihia M."/>
            <person name="Thomson N.R."/>
            <person name="Chaudhuri R."/>
            <person name="Henderson I.R."/>
            <person name="Sperandio V."/>
            <person name="Ravel J."/>
        </authorList>
    </citation>
    <scope>NUCLEOTIDE SEQUENCE [LARGE SCALE GENOMIC DNA]</scope>
    <source>
        <strain>HS</strain>
    </source>
</reference>
<comment type="function">
    <text evidence="1">Succinyl-CoA synthetase functions in the citric acid cycle (TCA), coupling the hydrolysis of succinyl-CoA to the synthesis of either ATP or GTP and thus represents the only step of substrate-level phosphorylation in the TCA. The beta subunit provides nucleotide specificity of the enzyme and binds the substrate succinate, while the binding sites for coenzyme A and phosphate are found in the alpha subunit.</text>
</comment>
<comment type="catalytic activity">
    <reaction evidence="1">
        <text>succinate + ATP + CoA = succinyl-CoA + ADP + phosphate</text>
        <dbReference type="Rhea" id="RHEA:17661"/>
        <dbReference type="ChEBI" id="CHEBI:30031"/>
        <dbReference type="ChEBI" id="CHEBI:30616"/>
        <dbReference type="ChEBI" id="CHEBI:43474"/>
        <dbReference type="ChEBI" id="CHEBI:57287"/>
        <dbReference type="ChEBI" id="CHEBI:57292"/>
        <dbReference type="ChEBI" id="CHEBI:456216"/>
        <dbReference type="EC" id="6.2.1.5"/>
    </reaction>
    <physiologicalReaction direction="right-to-left" evidence="1">
        <dbReference type="Rhea" id="RHEA:17663"/>
    </physiologicalReaction>
</comment>
<comment type="catalytic activity">
    <reaction evidence="1">
        <text>GTP + succinate + CoA = succinyl-CoA + GDP + phosphate</text>
        <dbReference type="Rhea" id="RHEA:22120"/>
        <dbReference type="ChEBI" id="CHEBI:30031"/>
        <dbReference type="ChEBI" id="CHEBI:37565"/>
        <dbReference type="ChEBI" id="CHEBI:43474"/>
        <dbReference type="ChEBI" id="CHEBI:57287"/>
        <dbReference type="ChEBI" id="CHEBI:57292"/>
        <dbReference type="ChEBI" id="CHEBI:58189"/>
    </reaction>
    <physiologicalReaction direction="right-to-left" evidence="1">
        <dbReference type="Rhea" id="RHEA:22122"/>
    </physiologicalReaction>
</comment>
<comment type="cofactor">
    <cofactor evidence="1">
        <name>Mg(2+)</name>
        <dbReference type="ChEBI" id="CHEBI:18420"/>
    </cofactor>
    <text evidence="1">Binds 1 Mg(2+) ion per subunit.</text>
</comment>
<comment type="pathway">
    <text evidence="1">Carbohydrate metabolism; tricarboxylic acid cycle; succinate from succinyl-CoA (ligase route): step 1/1.</text>
</comment>
<comment type="subunit">
    <text evidence="1">Heterotetramer of two alpha and two beta subunits.</text>
</comment>
<comment type="similarity">
    <text evidence="1">Belongs to the succinate/malate CoA ligase beta subunit family.</text>
</comment>
<dbReference type="EC" id="6.2.1.5" evidence="1"/>
<dbReference type="EMBL" id="CP000802">
    <property type="protein sequence ID" value="ABV05142.1"/>
    <property type="molecule type" value="Genomic_DNA"/>
</dbReference>
<dbReference type="RefSeq" id="WP_001048602.1">
    <property type="nucleotide sequence ID" value="NC_009800.1"/>
</dbReference>
<dbReference type="SMR" id="A7ZXY8"/>
<dbReference type="GeneID" id="93776757"/>
<dbReference type="KEGG" id="ecx:EcHS_A0775"/>
<dbReference type="HOGENOM" id="CLU_037430_4_0_6"/>
<dbReference type="UniPathway" id="UPA00223">
    <property type="reaction ID" value="UER00999"/>
</dbReference>
<dbReference type="GO" id="GO:0005829">
    <property type="term" value="C:cytosol"/>
    <property type="evidence" value="ECO:0007669"/>
    <property type="project" value="TreeGrafter"/>
</dbReference>
<dbReference type="GO" id="GO:0042709">
    <property type="term" value="C:succinate-CoA ligase complex"/>
    <property type="evidence" value="ECO:0007669"/>
    <property type="project" value="TreeGrafter"/>
</dbReference>
<dbReference type="GO" id="GO:0005524">
    <property type="term" value="F:ATP binding"/>
    <property type="evidence" value="ECO:0007669"/>
    <property type="project" value="UniProtKB-UniRule"/>
</dbReference>
<dbReference type="GO" id="GO:0000287">
    <property type="term" value="F:magnesium ion binding"/>
    <property type="evidence" value="ECO:0007669"/>
    <property type="project" value="UniProtKB-UniRule"/>
</dbReference>
<dbReference type="GO" id="GO:0004775">
    <property type="term" value="F:succinate-CoA ligase (ADP-forming) activity"/>
    <property type="evidence" value="ECO:0007669"/>
    <property type="project" value="UniProtKB-UniRule"/>
</dbReference>
<dbReference type="GO" id="GO:0004776">
    <property type="term" value="F:succinate-CoA ligase (GDP-forming) activity"/>
    <property type="evidence" value="ECO:0007669"/>
    <property type="project" value="RHEA"/>
</dbReference>
<dbReference type="GO" id="GO:0006104">
    <property type="term" value="P:succinyl-CoA metabolic process"/>
    <property type="evidence" value="ECO:0007669"/>
    <property type="project" value="TreeGrafter"/>
</dbReference>
<dbReference type="GO" id="GO:0006099">
    <property type="term" value="P:tricarboxylic acid cycle"/>
    <property type="evidence" value="ECO:0007669"/>
    <property type="project" value="UniProtKB-UniRule"/>
</dbReference>
<dbReference type="FunFam" id="3.30.1490.20:FF:000002">
    <property type="entry name" value="Succinate--CoA ligase [ADP-forming] subunit beta"/>
    <property type="match status" value="1"/>
</dbReference>
<dbReference type="FunFam" id="3.30.470.20:FF:000002">
    <property type="entry name" value="Succinate--CoA ligase [ADP-forming] subunit beta"/>
    <property type="match status" value="1"/>
</dbReference>
<dbReference type="FunFam" id="3.40.50.261:FF:000001">
    <property type="entry name" value="Succinate--CoA ligase [ADP-forming] subunit beta"/>
    <property type="match status" value="1"/>
</dbReference>
<dbReference type="Gene3D" id="3.30.1490.20">
    <property type="entry name" value="ATP-grasp fold, A domain"/>
    <property type="match status" value="1"/>
</dbReference>
<dbReference type="Gene3D" id="3.30.470.20">
    <property type="entry name" value="ATP-grasp fold, B domain"/>
    <property type="match status" value="1"/>
</dbReference>
<dbReference type="Gene3D" id="3.40.50.261">
    <property type="entry name" value="Succinyl-CoA synthetase domains"/>
    <property type="match status" value="1"/>
</dbReference>
<dbReference type="HAMAP" id="MF_00558">
    <property type="entry name" value="Succ_CoA_beta"/>
    <property type="match status" value="1"/>
</dbReference>
<dbReference type="InterPro" id="IPR011761">
    <property type="entry name" value="ATP-grasp"/>
</dbReference>
<dbReference type="InterPro" id="IPR013650">
    <property type="entry name" value="ATP-grasp_succ-CoA_synth-type"/>
</dbReference>
<dbReference type="InterPro" id="IPR013815">
    <property type="entry name" value="ATP_grasp_subdomain_1"/>
</dbReference>
<dbReference type="InterPro" id="IPR017866">
    <property type="entry name" value="Succ-CoA_synthase_bsu_CS"/>
</dbReference>
<dbReference type="InterPro" id="IPR005811">
    <property type="entry name" value="SUCC_ACL_C"/>
</dbReference>
<dbReference type="InterPro" id="IPR005809">
    <property type="entry name" value="Succ_CoA_ligase-like_bsu"/>
</dbReference>
<dbReference type="InterPro" id="IPR016102">
    <property type="entry name" value="Succinyl-CoA_synth-like"/>
</dbReference>
<dbReference type="NCBIfam" id="NF001913">
    <property type="entry name" value="PRK00696.1"/>
    <property type="match status" value="1"/>
</dbReference>
<dbReference type="NCBIfam" id="TIGR01016">
    <property type="entry name" value="sucCoAbeta"/>
    <property type="match status" value="1"/>
</dbReference>
<dbReference type="PANTHER" id="PTHR11815:SF10">
    <property type="entry name" value="SUCCINATE--COA LIGASE [GDP-FORMING] SUBUNIT BETA, MITOCHONDRIAL"/>
    <property type="match status" value="1"/>
</dbReference>
<dbReference type="PANTHER" id="PTHR11815">
    <property type="entry name" value="SUCCINYL-COA SYNTHETASE BETA CHAIN"/>
    <property type="match status" value="1"/>
</dbReference>
<dbReference type="Pfam" id="PF08442">
    <property type="entry name" value="ATP-grasp_2"/>
    <property type="match status" value="1"/>
</dbReference>
<dbReference type="Pfam" id="PF00549">
    <property type="entry name" value="Ligase_CoA"/>
    <property type="match status" value="1"/>
</dbReference>
<dbReference type="PIRSF" id="PIRSF001554">
    <property type="entry name" value="SucCS_beta"/>
    <property type="match status" value="1"/>
</dbReference>
<dbReference type="SUPFAM" id="SSF56059">
    <property type="entry name" value="Glutathione synthetase ATP-binding domain-like"/>
    <property type="match status" value="1"/>
</dbReference>
<dbReference type="SUPFAM" id="SSF52210">
    <property type="entry name" value="Succinyl-CoA synthetase domains"/>
    <property type="match status" value="1"/>
</dbReference>
<dbReference type="PROSITE" id="PS50975">
    <property type="entry name" value="ATP_GRASP"/>
    <property type="match status" value="1"/>
</dbReference>
<dbReference type="PROSITE" id="PS01217">
    <property type="entry name" value="SUCCINYL_COA_LIG_3"/>
    <property type="match status" value="1"/>
</dbReference>
<feature type="chain" id="PRO_1000082074" description="Succinate--CoA ligase [ADP-forming] subunit beta">
    <location>
        <begin position="1"/>
        <end position="388"/>
    </location>
</feature>
<feature type="domain" description="ATP-grasp" evidence="1">
    <location>
        <begin position="9"/>
        <end position="244"/>
    </location>
</feature>
<feature type="binding site" evidence="1">
    <location>
        <position position="46"/>
    </location>
    <ligand>
        <name>ATP</name>
        <dbReference type="ChEBI" id="CHEBI:30616"/>
    </ligand>
</feature>
<feature type="binding site" evidence="1">
    <location>
        <begin position="53"/>
        <end position="55"/>
    </location>
    <ligand>
        <name>ATP</name>
        <dbReference type="ChEBI" id="CHEBI:30616"/>
    </ligand>
</feature>
<feature type="binding site" evidence="1">
    <location>
        <position position="99"/>
    </location>
    <ligand>
        <name>ATP</name>
        <dbReference type="ChEBI" id="CHEBI:30616"/>
    </ligand>
</feature>
<feature type="binding site" evidence="1">
    <location>
        <position position="102"/>
    </location>
    <ligand>
        <name>ATP</name>
        <dbReference type="ChEBI" id="CHEBI:30616"/>
    </ligand>
</feature>
<feature type="binding site" evidence="1">
    <location>
        <position position="107"/>
    </location>
    <ligand>
        <name>ATP</name>
        <dbReference type="ChEBI" id="CHEBI:30616"/>
    </ligand>
</feature>
<feature type="binding site" evidence="1">
    <location>
        <position position="199"/>
    </location>
    <ligand>
        <name>Mg(2+)</name>
        <dbReference type="ChEBI" id="CHEBI:18420"/>
    </ligand>
</feature>
<feature type="binding site" evidence="1">
    <location>
        <position position="213"/>
    </location>
    <ligand>
        <name>Mg(2+)</name>
        <dbReference type="ChEBI" id="CHEBI:18420"/>
    </ligand>
</feature>
<feature type="binding site" evidence="1">
    <location>
        <position position="264"/>
    </location>
    <ligand>
        <name>substrate</name>
        <note>ligand shared with subunit alpha</note>
    </ligand>
</feature>
<feature type="binding site" evidence="1">
    <location>
        <begin position="321"/>
        <end position="323"/>
    </location>
    <ligand>
        <name>substrate</name>
        <note>ligand shared with subunit alpha</note>
    </ligand>
</feature>
<protein>
    <recommendedName>
        <fullName evidence="1">Succinate--CoA ligase [ADP-forming] subunit beta</fullName>
        <ecNumber evidence="1">6.2.1.5</ecNumber>
    </recommendedName>
    <alternativeName>
        <fullName evidence="1">Succinyl-CoA synthetase subunit beta</fullName>
        <shortName evidence="1">SCS-beta</shortName>
    </alternativeName>
</protein>
<organism>
    <name type="scientific">Escherichia coli O9:H4 (strain HS)</name>
    <dbReference type="NCBI Taxonomy" id="331112"/>
    <lineage>
        <taxon>Bacteria</taxon>
        <taxon>Pseudomonadati</taxon>
        <taxon>Pseudomonadota</taxon>
        <taxon>Gammaproteobacteria</taxon>
        <taxon>Enterobacterales</taxon>
        <taxon>Enterobacteriaceae</taxon>
        <taxon>Escherichia</taxon>
    </lineage>
</organism>
<sequence>MNLHEYQAKQLFARYGLPAPVGYACTTPREAEEAASKIGAGPWVVKCQVHAGGRGKAGGVKVVNSKEDIRAFAENWLGKRLVTYQTDANGQPVNQILVEAATDIAKELYLGAVVDRSSRRVVFMASTEGGVEIEKVAEETPHLIHKVALDPLTGPMPYQGRELAFKLGLEGKLVQQFTKIFMGLATIFLERDLALIEINPLVITKQGDLICLDGKLGADGNALFRQPDLREMRDQSQEDPREAQAAQWELNYVALDGNIGCMVNGAGLAMGTMDIVKLHGGEPANFLDVGGGATKERVTEAFKIILSDDKVKAVLVNIFGGIVRCDLIADGIIGAVAEVGVNVPVVVRLEGNNAELGAKKLADSGLNIIAAKGLTDAAQQVVAAVEGK</sequence>
<evidence type="ECO:0000255" key="1">
    <source>
        <dbReference type="HAMAP-Rule" id="MF_00558"/>
    </source>
</evidence>
<accession>A7ZXY8</accession>
<keyword id="KW-0067">ATP-binding</keyword>
<keyword id="KW-0436">Ligase</keyword>
<keyword id="KW-0460">Magnesium</keyword>
<keyword id="KW-0479">Metal-binding</keyword>
<keyword id="KW-0547">Nucleotide-binding</keyword>
<keyword id="KW-0816">Tricarboxylic acid cycle</keyword>
<gene>
    <name evidence="1" type="primary">sucC</name>
    <name type="ordered locus">EcHS_A0775</name>
</gene>